<evidence type="ECO:0000255" key="1">
    <source>
        <dbReference type="PROSITE-ProRule" id="PRU00238"/>
    </source>
</evidence>
<feature type="chain" id="PRO_0000052833" description="Hemoglobin subunit alpha-D">
    <location>
        <begin position="1"/>
        <end position="141"/>
    </location>
</feature>
<feature type="domain" description="Globin" evidence="1">
    <location>
        <begin position="1"/>
        <end position="141"/>
    </location>
</feature>
<feature type="binding site" description="distal binding residue">
    <location>
        <position position="58"/>
    </location>
    <ligand>
        <name>heme b</name>
        <dbReference type="ChEBI" id="CHEBI:60344"/>
    </ligand>
    <ligandPart>
        <name>Fe</name>
        <dbReference type="ChEBI" id="CHEBI:18248"/>
    </ligandPart>
</feature>
<feature type="binding site" description="proximal binding residue">
    <location>
        <position position="87"/>
    </location>
    <ligand>
        <name>heme b</name>
        <dbReference type="ChEBI" id="CHEBI:60344"/>
    </ligand>
    <ligandPart>
        <name>Fe</name>
        <dbReference type="ChEBI" id="CHEBI:18248"/>
    </ligandPart>
</feature>
<keyword id="KW-0903">Direct protein sequencing</keyword>
<keyword id="KW-0349">Heme</keyword>
<keyword id="KW-0408">Iron</keyword>
<keyword id="KW-0479">Metal-binding</keyword>
<keyword id="KW-0561">Oxygen transport</keyword>
<keyword id="KW-1185">Reference proteome</keyword>
<keyword id="KW-0813">Transport</keyword>
<comment type="function">
    <text>Involved in oxygen transport from the lung to the various peripheral tissues.</text>
</comment>
<comment type="subunit">
    <text>Heterotetramer of two alpha-D chains and two beta chains.</text>
</comment>
<comment type="tissue specificity">
    <text>Red blood cells.</text>
</comment>
<comment type="developmental stage">
    <text>In birds, the alpha-D chain occurs in a minor hemoglobin component, called hemoglobin d, which is expressed in late embryonic and adult life.</text>
</comment>
<comment type="similarity">
    <text evidence="1">Belongs to the globin family.</text>
</comment>
<protein>
    <recommendedName>
        <fullName>Hemoglobin subunit alpha-D</fullName>
    </recommendedName>
    <alternativeName>
        <fullName>Alpha-D-globin</fullName>
    </alternativeName>
    <alternativeName>
        <fullName>Hemoglobin alpha-D chain</fullName>
    </alternativeName>
</protein>
<sequence length="141" mass="15665">MLTAEDKKLIQQAWEKAASHQEEFGAEALTRMFTTYPQTKTYFPHFDLSPGSDQVRGHGKKVLGALGNAVKNVDNLSQAMSELSNLHAYNLRVDPVNFKLLSQCIQVVLAAHLGKDYTPEVHAAFDKFLSAVSAVLAEKYR</sequence>
<accession>P81024</accession>
<dbReference type="PIR" id="S56103">
    <property type="entry name" value="S56103"/>
</dbReference>
<dbReference type="SMR" id="P81024"/>
<dbReference type="FunCoup" id="P81024">
    <property type="interactions" value="43"/>
</dbReference>
<dbReference type="InParanoid" id="P81024"/>
<dbReference type="Proteomes" id="UP000001645">
    <property type="component" value="Unplaced"/>
</dbReference>
<dbReference type="GO" id="GO:0072562">
    <property type="term" value="C:blood microparticle"/>
    <property type="evidence" value="ECO:0007669"/>
    <property type="project" value="TreeGrafter"/>
</dbReference>
<dbReference type="GO" id="GO:0031838">
    <property type="term" value="C:haptoglobin-hemoglobin complex"/>
    <property type="evidence" value="ECO:0007669"/>
    <property type="project" value="TreeGrafter"/>
</dbReference>
<dbReference type="GO" id="GO:0005833">
    <property type="term" value="C:hemoglobin complex"/>
    <property type="evidence" value="ECO:0007669"/>
    <property type="project" value="InterPro"/>
</dbReference>
<dbReference type="GO" id="GO:0031720">
    <property type="term" value="F:haptoglobin binding"/>
    <property type="evidence" value="ECO:0007669"/>
    <property type="project" value="TreeGrafter"/>
</dbReference>
<dbReference type="GO" id="GO:0020037">
    <property type="term" value="F:heme binding"/>
    <property type="evidence" value="ECO:0007669"/>
    <property type="project" value="InterPro"/>
</dbReference>
<dbReference type="GO" id="GO:0005506">
    <property type="term" value="F:iron ion binding"/>
    <property type="evidence" value="ECO:0007669"/>
    <property type="project" value="InterPro"/>
</dbReference>
<dbReference type="GO" id="GO:0043177">
    <property type="term" value="F:organic acid binding"/>
    <property type="evidence" value="ECO:0007669"/>
    <property type="project" value="TreeGrafter"/>
</dbReference>
<dbReference type="GO" id="GO:0019825">
    <property type="term" value="F:oxygen binding"/>
    <property type="evidence" value="ECO:0007669"/>
    <property type="project" value="InterPro"/>
</dbReference>
<dbReference type="GO" id="GO:0005344">
    <property type="term" value="F:oxygen carrier activity"/>
    <property type="evidence" value="ECO:0007669"/>
    <property type="project" value="UniProtKB-KW"/>
</dbReference>
<dbReference type="GO" id="GO:0004601">
    <property type="term" value="F:peroxidase activity"/>
    <property type="evidence" value="ECO:0007669"/>
    <property type="project" value="TreeGrafter"/>
</dbReference>
<dbReference type="GO" id="GO:0042744">
    <property type="term" value="P:hydrogen peroxide catabolic process"/>
    <property type="evidence" value="ECO:0007669"/>
    <property type="project" value="TreeGrafter"/>
</dbReference>
<dbReference type="CDD" id="cd08927">
    <property type="entry name" value="Hb-alpha-like"/>
    <property type="match status" value="1"/>
</dbReference>
<dbReference type="FunFam" id="1.10.490.10:FF:000002">
    <property type="entry name" value="Hemoglobin subunit alpha"/>
    <property type="match status" value="1"/>
</dbReference>
<dbReference type="Gene3D" id="1.10.490.10">
    <property type="entry name" value="Globins"/>
    <property type="match status" value="1"/>
</dbReference>
<dbReference type="InterPro" id="IPR000971">
    <property type="entry name" value="Globin"/>
</dbReference>
<dbReference type="InterPro" id="IPR009050">
    <property type="entry name" value="Globin-like_sf"/>
</dbReference>
<dbReference type="InterPro" id="IPR012292">
    <property type="entry name" value="Globin/Proto"/>
</dbReference>
<dbReference type="InterPro" id="IPR002338">
    <property type="entry name" value="Hemoglobin_a-typ"/>
</dbReference>
<dbReference type="InterPro" id="IPR050056">
    <property type="entry name" value="Hemoglobin_oxygen_transport"/>
</dbReference>
<dbReference type="InterPro" id="IPR002339">
    <property type="entry name" value="Hemoglobin_pi"/>
</dbReference>
<dbReference type="PANTHER" id="PTHR11442">
    <property type="entry name" value="HEMOGLOBIN FAMILY MEMBER"/>
    <property type="match status" value="1"/>
</dbReference>
<dbReference type="PANTHER" id="PTHR11442:SF41">
    <property type="entry name" value="HEMOGLOBIN SUBUNIT ZETA"/>
    <property type="match status" value="1"/>
</dbReference>
<dbReference type="Pfam" id="PF00042">
    <property type="entry name" value="Globin"/>
    <property type="match status" value="1"/>
</dbReference>
<dbReference type="PRINTS" id="PR00612">
    <property type="entry name" value="ALPHAHAEM"/>
</dbReference>
<dbReference type="PRINTS" id="PR00815">
    <property type="entry name" value="PIHAEM"/>
</dbReference>
<dbReference type="SUPFAM" id="SSF46458">
    <property type="entry name" value="Globin-like"/>
    <property type="match status" value="1"/>
</dbReference>
<dbReference type="PROSITE" id="PS01033">
    <property type="entry name" value="GLOBIN"/>
    <property type="match status" value="1"/>
</dbReference>
<name>HBAD_MELGA</name>
<organism>
    <name type="scientific">Meleagris gallopavo</name>
    <name type="common">Wild turkey</name>
    <dbReference type="NCBI Taxonomy" id="9103"/>
    <lineage>
        <taxon>Eukaryota</taxon>
        <taxon>Metazoa</taxon>
        <taxon>Chordata</taxon>
        <taxon>Craniata</taxon>
        <taxon>Vertebrata</taxon>
        <taxon>Euteleostomi</taxon>
        <taxon>Archelosauria</taxon>
        <taxon>Archosauria</taxon>
        <taxon>Dinosauria</taxon>
        <taxon>Saurischia</taxon>
        <taxon>Theropoda</taxon>
        <taxon>Coelurosauria</taxon>
        <taxon>Aves</taxon>
        <taxon>Neognathae</taxon>
        <taxon>Galloanserae</taxon>
        <taxon>Galliformes</taxon>
        <taxon>Phasianidae</taxon>
        <taxon>Meleagridinae</taxon>
        <taxon>Meleagris</taxon>
    </lineage>
</organism>
<reference key="1">
    <citation type="journal article" date="1995" name="Biol. Chem. Hoppe-Seyler">
        <title>Amino acid sequence of alpha- and beta-polypeptide chains of turkey (Meleagris gallopavo) hemoglobin.</title>
        <authorList>
            <person name="Eguchi Y."/>
            <person name="Ikehara T."/>
            <person name="Kayo S."/>
            <person name="Eguchi T."/>
            <person name="Takei H."/>
        </authorList>
    </citation>
    <scope>PROTEIN SEQUENCE</scope>
</reference>
<gene>
    <name type="primary">HBAD</name>
</gene>
<proteinExistence type="evidence at protein level"/>